<keyword id="KW-0472">Membrane</keyword>
<keyword id="KW-0602">Photosynthesis</keyword>
<keyword id="KW-0603">Photosystem I</keyword>
<keyword id="KW-1185">Reference proteome</keyword>
<keyword id="KW-0793">Thylakoid</keyword>
<sequence>MAISRGDKVRIKRPESYWYNDVGTVASIDTSGIRYPVVVRFEKVNYNGISGSEGGINTNNFAQAELEPA</sequence>
<comment type="function">
    <text evidence="1">Stabilizes the interaction between PsaC and the PSI core, assists the docking of the ferredoxin to PSI and interacts with ferredoxin-NADP oxidoreductase.</text>
</comment>
<comment type="subcellular location">
    <subcellularLocation>
        <location evidence="1">Cellular thylakoid membrane</location>
        <topology evidence="1">Peripheral membrane protein</topology>
    </subcellularLocation>
</comment>
<comment type="similarity">
    <text evidence="1">Belongs to the PsaE family.</text>
</comment>
<reference key="1">
    <citation type="journal article" date="2006" name="Proc. Natl. Acad. Sci. U.S.A.">
        <title>Genome sequence of Synechococcus CC9311: insights into adaptation to a coastal environment.</title>
        <authorList>
            <person name="Palenik B."/>
            <person name="Ren Q."/>
            <person name="Dupont C.L."/>
            <person name="Myers G.S."/>
            <person name="Heidelberg J.F."/>
            <person name="Badger J.H."/>
            <person name="Madupu R."/>
            <person name="Nelson W.C."/>
            <person name="Brinkac L.M."/>
            <person name="Dodson R.J."/>
            <person name="Durkin A.S."/>
            <person name="Daugherty S.C."/>
            <person name="Sullivan S.A."/>
            <person name="Khouri H."/>
            <person name="Mohamoud Y."/>
            <person name="Halpin R."/>
            <person name="Paulsen I.T."/>
        </authorList>
    </citation>
    <scope>NUCLEOTIDE SEQUENCE [LARGE SCALE GENOMIC DNA]</scope>
    <source>
        <strain>CC9311</strain>
    </source>
</reference>
<protein>
    <recommendedName>
        <fullName evidence="1">Photosystem I reaction center subunit IV</fullName>
    </recommendedName>
</protein>
<gene>
    <name evidence="1" type="primary">psaE</name>
    <name type="ordered locus">sync_0562</name>
</gene>
<dbReference type="EMBL" id="CP000435">
    <property type="protein sequence ID" value="ABI47445.1"/>
    <property type="molecule type" value="Genomic_DNA"/>
</dbReference>
<dbReference type="RefSeq" id="WP_006854760.1">
    <property type="nucleotide sequence ID" value="NC_008319.1"/>
</dbReference>
<dbReference type="SMR" id="Q0ICP0"/>
<dbReference type="STRING" id="64471.sync_0562"/>
<dbReference type="KEGG" id="syg:sync_0562"/>
<dbReference type="eggNOG" id="ENOG503313D">
    <property type="taxonomic scope" value="Bacteria"/>
</dbReference>
<dbReference type="HOGENOM" id="CLU_136462_2_1_3"/>
<dbReference type="OrthoDB" id="427926at2"/>
<dbReference type="Proteomes" id="UP000001961">
    <property type="component" value="Chromosome"/>
</dbReference>
<dbReference type="GO" id="GO:0009538">
    <property type="term" value="C:photosystem I reaction center"/>
    <property type="evidence" value="ECO:0007669"/>
    <property type="project" value="InterPro"/>
</dbReference>
<dbReference type="GO" id="GO:0031676">
    <property type="term" value="C:plasma membrane-derived thylakoid membrane"/>
    <property type="evidence" value="ECO:0007669"/>
    <property type="project" value="UniProtKB-SubCell"/>
</dbReference>
<dbReference type="GO" id="GO:0015979">
    <property type="term" value="P:photosynthesis"/>
    <property type="evidence" value="ECO:0007669"/>
    <property type="project" value="UniProtKB-UniRule"/>
</dbReference>
<dbReference type="Gene3D" id="2.30.30.50">
    <property type="match status" value="1"/>
</dbReference>
<dbReference type="HAMAP" id="MF_00613">
    <property type="entry name" value="PSI_PsaE"/>
    <property type="match status" value="1"/>
</dbReference>
<dbReference type="InterPro" id="IPR008990">
    <property type="entry name" value="Elect_transpt_acc-like_dom_sf"/>
</dbReference>
<dbReference type="InterPro" id="IPR003375">
    <property type="entry name" value="PSI_PsaE"/>
</dbReference>
<dbReference type="NCBIfam" id="NF002745">
    <property type="entry name" value="PRK02749.1"/>
    <property type="match status" value="1"/>
</dbReference>
<dbReference type="PANTHER" id="PTHR34549">
    <property type="entry name" value="PHOTOSYSTEM I REACTION CENTER SUBUNIT IV A, CHLOROPLASTIC-RELATED"/>
    <property type="match status" value="1"/>
</dbReference>
<dbReference type="PANTHER" id="PTHR34549:SF2">
    <property type="entry name" value="PHOTOSYSTEM I SUBUNIT IV"/>
    <property type="match status" value="1"/>
</dbReference>
<dbReference type="Pfam" id="PF02427">
    <property type="entry name" value="PSI_PsaE"/>
    <property type="match status" value="1"/>
</dbReference>
<dbReference type="SUPFAM" id="SSF50090">
    <property type="entry name" value="Electron transport accessory proteins"/>
    <property type="match status" value="1"/>
</dbReference>
<feature type="chain" id="PRO_1000061313" description="Photosystem I reaction center subunit IV">
    <location>
        <begin position="1"/>
        <end position="69"/>
    </location>
</feature>
<organism>
    <name type="scientific">Synechococcus sp. (strain CC9311)</name>
    <dbReference type="NCBI Taxonomy" id="64471"/>
    <lineage>
        <taxon>Bacteria</taxon>
        <taxon>Bacillati</taxon>
        <taxon>Cyanobacteriota</taxon>
        <taxon>Cyanophyceae</taxon>
        <taxon>Synechococcales</taxon>
        <taxon>Synechococcaceae</taxon>
        <taxon>Synechococcus</taxon>
    </lineage>
</organism>
<evidence type="ECO:0000255" key="1">
    <source>
        <dbReference type="HAMAP-Rule" id="MF_00613"/>
    </source>
</evidence>
<accession>Q0ICP0</accession>
<name>PSAE_SYNS3</name>
<proteinExistence type="inferred from homology"/>